<feature type="chain" id="PRO_1000085296" description="Chaperone protein DnaJ">
    <location>
        <begin position="1"/>
        <end position="377"/>
    </location>
</feature>
<feature type="domain" description="J" evidence="1">
    <location>
        <begin position="5"/>
        <end position="70"/>
    </location>
</feature>
<feature type="repeat" description="CXXCXGXG motif">
    <location>
        <begin position="146"/>
        <end position="153"/>
    </location>
</feature>
<feature type="repeat" description="CXXCXGXG motif">
    <location>
        <begin position="163"/>
        <end position="170"/>
    </location>
</feature>
<feature type="repeat" description="CXXCXGXG motif">
    <location>
        <begin position="185"/>
        <end position="192"/>
    </location>
</feature>
<feature type="repeat" description="CXXCXGXG motif">
    <location>
        <begin position="199"/>
        <end position="206"/>
    </location>
</feature>
<feature type="zinc finger region" description="CR-type" evidence="1">
    <location>
        <begin position="133"/>
        <end position="211"/>
    </location>
</feature>
<feature type="binding site" evidence="1">
    <location>
        <position position="146"/>
    </location>
    <ligand>
        <name>Zn(2+)</name>
        <dbReference type="ChEBI" id="CHEBI:29105"/>
        <label>1</label>
    </ligand>
</feature>
<feature type="binding site" evidence="1">
    <location>
        <position position="149"/>
    </location>
    <ligand>
        <name>Zn(2+)</name>
        <dbReference type="ChEBI" id="CHEBI:29105"/>
        <label>1</label>
    </ligand>
</feature>
<feature type="binding site" evidence="1">
    <location>
        <position position="163"/>
    </location>
    <ligand>
        <name>Zn(2+)</name>
        <dbReference type="ChEBI" id="CHEBI:29105"/>
        <label>2</label>
    </ligand>
</feature>
<feature type="binding site" evidence="1">
    <location>
        <position position="166"/>
    </location>
    <ligand>
        <name>Zn(2+)</name>
        <dbReference type="ChEBI" id="CHEBI:29105"/>
        <label>2</label>
    </ligand>
</feature>
<feature type="binding site" evidence="1">
    <location>
        <position position="185"/>
    </location>
    <ligand>
        <name>Zn(2+)</name>
        <dbReference type="ChEBI" id="CHEBI:29105"/>
        <label>2</label>
    </ligand>
</feature>
<feature type="binding site" evidence="1">
    <location>
        <position position="188"/>
    </location>
    <ligand>
        <name>Zn(2+)</name>
        <dbReference type="ChEBI" id="CHEBI:29105"/>
        <label>2</label>
    </ligand>
</feature>
<feature type="binding site" evidence="1">
    <location>
        <position position="199"/>
    </location>
    <ligand>
        <name>Zn(2+)</name>
        <dbReference type="ChEBI" id="CHEBI:29105"/>
        <label>1</label>
    </ligand>
</feature>
<feature type="binding site" evidence="1">
    <location>
        <position position="202"/>
    </location>
    <ligand>
        <name>Zn(2+)</name>
        <dbReference type="ChEBI" id="CHEBI:29105"/>
        <label>1</label>
    </ligand>
</feature>
<sequence>MSKRDYYEVLGVGRDASEREIKKAYKRLAMKFHPDRNPGDKAAEASFKEVKEAYEILTDANKKAAYDQFGHAGVDPNRGGGGGYGGAGDFGDIFGDVFGDIFGGGRRGGQRQAARGSDLRYNLELSLEEAVKGLTKELRIPTLASCDVCDGSGAKKGSSATTCGTCHGQGQVQMRQGFFTVQQPCPTCHGRGKIIKDPCSKCHGDGRVEKTKTLSVKIPAGVDTGDRIRLAGEGEAGEFGAPPGDLYVQVTVREHAIFVRDGNNLYCEVPISFSKAALGGEIEVPTLDGKVSLKIPAETQTGRMFRLRGKGVKSVRSHAVGDLLCKVVMETPVNLNERQKELLREFEATLTGESKKHSPKAEGFFDGVKKFFQDLNS</sequence>
<proteinExistence type="inferred from homology"/>
<organism>
    <name type="scientific">Shewanella sp. (strain ANA-3)</name>
    <dbReference type="NCBI Taxonomy" id="94122"/>
    <lineage>
        <taxon>Bacteria</taxon>
        <taxon>Pseudomonadati</taxon>
        <taxon>Pseudomonadota</taxon>
        <taxon>Gammaproteobacteria</taxon>
        <taxon>Alteromonadales</taxon>
        <taxon>Shewanellaceae</taxon>
        <taxon>Shewanella</taxon>
    </lineage>
</organism>
<evidence type="ECO:0000255" key="1">
    <source>
        <dbReference type="HAMAP-Rule" id="MF_01152"/>
    </source>
</evidence>
<keyword id="KW-0143">Chaperone</keyword>
<keyword id="KW-0963">Cytoplasm</keyword>
<keyword id="KW-0235">DNA replication</keyword>
<keyword id="KW-0479">Metal-binding</keyword>
<keyword id="KW-0677">Repeat</keyword>
<keyword id="KW-0346">Stress response</keyword>
<keyword id="KW-0862">Zinc</keyword>
<keyword id="KW-0863">Zinc-finger</keyword>
<reference key="1">
    <citation type="submission" date="2006-09" db="EMBL/GenBank/DDBJ databases">
        <title>Complete sequence of chromosome 1 of Shewanella sp. ANA-3.</title>
        <authorList>
            <person name="Copeland A."/>
            <person name="Lucas S."/>
            <person name="Lapidus A."/>
            <person name="Barry K."/>
            <person name="Detter J.C."/>
            <person name="Glavina del Rio T."/>
            <person name="Hammon N."/>
            <person name="Israni S."/>
            <person name="Dalin E."/>
            <person name="Tice H."/>
            <person name="Pitluck S."/>
            <person name="Chertkov O."/>
            <person name="Brettin T."/>
            <person name="Bruce D."/>
            <person name="Han C."/>
            <person name="Tapia R."/>
            <person name="Gilna P."/>
            <person name="Schmutz J."/>
            <person name="Larimer F."/>
            <person name="Land M."/>
            <person name="Hauser L."/>
            <person name="Kyrpides N."/>
            <person name="Kim E."/>
            <person name="Newman D."/>
            <person name="Salticov C."/>
            <person name="Konstantinidis K."/>
            <person name="Klappenback J."/>
            <person name="Tiedje J."/>
            <person name="Richardson P."/>
        </authorList>
    </citation>
    <scope>NUCLEOTIDE SEQUENCE [LARGE SCALE GENOMIC DNA]</scope>
    <source>
        <strain>ANA-3</strain>
    </source>
</reference>
<accession>A0KTS6</accession>
<dbReference type="EMBL" id="CP000469">
    <property type="protein sequence ID" value="ABK47195.1"/>
    <property type="molecule type" value="Genomic_DNA"/>
</dbReference>
<dbReference type="RefSeq" id="WP_011716086.1">
    <property type="nucleotide sequence ID" value="NC_008577.1"/>
</dbReference>
<dbReference type="SMR" id="A0KTS6"/>
<dbReference type="STRING" id="94122.Shewana3_0960"/>
<dbReference type="KEGG" id="shn:Shewana3_0960"/>
<dbReference type="eggNOG" id="COG0484">
    <property type="taxonomic scope" value="Bacteria"/>
</dbReference>
<dbReference type="HOGENOM" id="CLU_017633_0_7_6"/>
<dbReference type="OrthoDB" id="9779889at2"/>
<dbReference type="Proteomes" id="UP000002589">
    <property type="component" value="Chromosome"/>
</dbReference>
<dbReference type="GO" id="GO:0005737">
    <property type="term" value="C:cytoplasm"/>
    <property type="evidence" value="ECO:0007669"/>
    <property type="project" value="UniProtKB-SubCell"/>
</dbReference>
<dbReference type="GO" id="GO:0005524">
    <property type="term" value="F:ATP binding"/>
    <property type="evidence" value="ECO:0007669"/>
    <property type="project" value="InterPro"/>
</dbReference>
<dbReference type="GO" id="GO:0031072">
    <property type="term" value="F:heat shock protein binding"/>
    <property type="evidence" value="ECO:0007669"/>
    <property type="project" value="InterPro"/>
</dbReference>
<dbReference type="GO" id="GO:0051082">
    <property type="term" value="F:unfolded protein binding"/>
    <property type="evidence" value="ECO:0007669"/>
    <property type="project" value="UniProtKB-UniRule"/>
</dbReference>
<dbReference type="GO" id="GO:0008270">
    <property type="term" value="F:zinc ion binding"/>
    <property type="evidence" value="ECO:0007669"/>
    <property type="project" value="UniProtKB-UniRule"/>
</dbReference>
<dbReference type="GO" id="GO:0051085">
    <property type="term" value="P:chaperone cofactor-dependent protein refolding"/>
    <property type="evidence" value="ECO:0007669"/>
    <property type="project" value="TreeGrafter"/>
</dbReference>
<dbReference type="GO" id="GO:0006260">
    <property type="term" value="P:DNA replication"/>
    <property type="evidence" value="ECO:0007669"/>
    <property type="project" value="UniProtKB-KW"/>
</dbReference>
<dbReference type="GO" id="GO:0042026">
    <property type="term" value="P:protein refolding"/>
    <property type="evidence" value="ECO:0007669"/>
    <property type="project" value="TreeGrafter"/>
</dbReference>
<dbReference type="GO" id="GO:0009408">
    <property type="term" value="P:response to heat"/>
    <property type="evidence" value="ECO:0007669"/>
    <property type="project" value="InterPro"/>
</dbReference>
<dbReference type="CDD" id="cd06257">
    <property type="entry name" value="DnaJ"/>
    <property type="match status" value="1"/>
</dbReference>
<dbReference type="CDD" id="cd10747">
    <property type="entry name" value="DnaJ_C"/>
    <property type="match status" value="1"/>
</dbReference>
<dbReference type="CDD" id="cd10719">
    <property type="entry name" value="DnaJ_zf"/>
    <property type="match status" value="1"/>
</dbReference>
<dbReference type="FunFam" id="1.10.287.110:FF:000003">
    <property type="entry name" value="Molecular chaperone DnaJ"/>
    <property type="match status" value="1"/>
</dbReference>
<dbReference type="FunFam" id="2.10.230.10:FF:000002">
    <property type="entry name" value="Molecular chaperone DnaJ"/>
    <property type="match status" value="1"/>
</dbReference>
<dbReference type="FunFam" id="2.60.260.20:FF:000004">
    <property type="entry name" value="Molecular chaperone DnaJ"/>
    <property type="match status" value="1"/>
</dbReference>
<dbReference type="Gene3D" id="1.10.287.110">
    <property type="entry name" value="DnaJ domain"/>
    <property type="match status" value="1"/>
</dbReference>
<dbReference type="Gene3D" id="2.10.230.10">
    <property type="entry name" value="Heat shock protein DnaJ, cysteine-rich domain"/>
    <property type="match status" value="1"/>
</dbReference>
<dbReference type="Gene3D" id="2.60.260.20">
    <property type="entry name" value="Urease metallochaperone UreE, N-terminal domain"/>
    <property type="match status" value="2"/>
</dbReference>
<dbReference type="HAMAP" id="MF_01152">
    <property type="entry name" value="DnaJ"/>
    <property type="match status" value="1"/>
</dbReference>
<dbReference type="InterPro" id="IPR012724">
    <property type="entry name" value="DnaJ"/>
</dbReference>
<dbReference type="InterPro" id="IPR002939">
    <property type="entry name" value="DnaJ_C"/>
</dbReference>
<dbReference type="InterPro" id="IPR001623">
    <property type="entry name" value="DnaJ_domain"/>
</dbReference>
<dbReference type="InterPro" id="IPR018253">
    <property type="entry name" value="DnaJ_domain_CS"/>
</dbReference>
<dbReference type="InterPro" id="IPR008971">
    <property type="entry name" value="HSP40/DnaJ_pept-bd"/>
</dbReference>
<dbReference type="InterPro" id="IPR001305">
    <property type="entry name" value="HSP_DnaJ_Cys-rich_dom"/>
</dbReference>
<dbReference type="InterPro" id="IPR036410">
    <property type="entry name" value="HSP_DnaJ_Cys-rich_dom_sf"/>
</dbReference>
<dbReference type="InterPro" id="IPR036869">
    <property type="entry name" value="J_dom_sf"/>
</dbReference>
<dbReference type="NCBIfam" id="TIGR02349">
    <property type="entry name" value="DnaJ_bact"/>
    <property type="match status" value="1"/>
</dbReference>
<dbReference type="NCBIfam" id="NF008035">
    <property type="entry name" value="PRK10767.1"/>
    <property type="match status" value="1"/>
</dbReference>
<dbReference type="PANTHER" id="PTHR43096:SF48">
    <property type="entry name" value="CHAPERONE PROTEIN DNAJ"/>
    <property type="match status" value="1"/>
</dbReference>
<dbReference type="PANTHER" id="PTHR43096">
    <property type="entry name" value="DNAJ HOMOLOG 1, MITOCHONDRIAL-RELATED"/>
    <property type="match status" value="1"/>
</dbReference>
<dbReference type="Pfam" id="PF00226">
    <property type="entry name" value="DnaJ"/>
    <property type="match status" value="1"/>
</dbReference>
<dbReference type="Pfam" id="PF01556">
    <property type="entry name" value="DnaJ_C"/>
    <property type="match status" value="1"/>
</dbReference>
<dbReference type="Pfam" id="PF00684">
    <property type="entry name" value="DnaJ_CXXCXGXG"/>
    <property type="match status" value="1"/>
</dbReference>
<dbReference type="PRINTS" id="PR00625">
    <property type="entry name" value="JDOMAIN"/>
</dbReference>
<dbReference type="SMART" id="SM00271">
    <property type="entry name" value="DnaJ"/>
    <property type="match status" value="1"/>
</dbReference>
<dbReference type="SUPFAM" id="SSF46565">
    <property type="entry name" value="Chaperone J-domain"/>
    <property type="match status" value="1"/>
</dbReference>
<dbReference type="SUPFAM" id="SSF57938">
    <property type="entry name" value="DnaJ/Hsp40 cysteine-rich domain"/>
    <property type="match status" value="1"/>
</dbReference>
<dbReference type="SUPFAM" id="SSF49493">
    <property type="entry name" value="HSP40/DnaJ peptide-binding domain"/>
    <property type="match status" value="2"/>
</dbReference>
<dbReference type="PROSITE" id="PS00636">
    <property type="entry name" value="DNAJ_1"/>
    <property type="match status" value="1"/>
</dbReference>
<dbReference type="PROSITE" id="PS50076">
    <property type="entry name" value="DNAJ_2"/>
    <property type="match status" value="1"/>
</dbReference>
<dbReference type="PROSITE" id="PS51188">
    <property type="entry name" value="ZF_CR"/>
    <property type="match status" value="1"/>
</dbReference>
<comment type="function">
    <text evidence="1">Participates actively in the response to hyperosmotic and heat shock by preventing the aggregation of stress-denatured proteins and by disaggregating proteins, also in an autonomous, DnaK-independent fashion. Unfolded proteins bind initially to DnaJ; upon interaction with the DnaJ-bound protein, DnaK hydrolyzes its bound ATP, resulting in the formation of a stable complex. GrpE releases ADP from DnaK; ATP binding to DnaK triggers the release of the substrate protein, thus completing the reaction cycle. Several rounds of ATP-dependent interactions between DnaJ, DnaK and GrpE are required for fully efficient folding. Also involved, together with DnaK and GrpE, in the DNA replication of plasmids through activation of initiation proteins.</text>
</comment>
<comment type="cofactor">
    <cofactor evidence="1">
        <name>Zn(2+)</name>
        <dbReference type="ChEBI" id="CHEBI:29105"/>
    </cofactor>
    <text evidence="1">Binds 2 Zn(2+) ions per monomer.</text>
</comment>
<comment type="subunit">
    <text evidence="1">Homodimer.</text>
</comment>
<comment type="subcellular location">
    <subcellularLocation>
        <location evidence="1">Cytoplasm</location>
    </subcellularLocation>
</comment>
<comment type="domain">
    <text evidence="1">The J domain is necessary and sufficient to stimulate DnaK ATPase activity. Zinc center 1 plays an important role in the autonomous, DnaK-independent chaperone activity of DnaJ. Zinc center 2 is essential for interaction with DnaK and for DnaJ activity.</text>
</comment>
<comment type="similarity">
    <text evidence="1">Belongs to the DnaJ family.</text>
</comment>
<protein>
    <recommendedName>
        <fullName evidence="1">Chaperone protein DnaJ</fullName>
    </recommendedName>
</protein>
<name>DNAJ_SHESA</name>
<gene>
    <name evidence="1" type="primary">dnaJ</name>
    <name type="ordered locus">Shewana3_0960</name>
</gene>